<proteinExistence type="inferred from homology"/>
<protein>
    <recommendedName>
        <fullName evidence="1">Probable inorganic carbon transporter subunit DabA</fullName>
    </recommendedName>
</protein>
<evidence type="ECO:0000255" key="1">
    <source>
        <dbReference type="HAMAP-Rule" id="MF_01871"/>
    </source>
</evidence>
<name>DABA_STAEQ</name>
<accession>Q5HRV7</accession>
<organism>
    <name type="scientific">Staphylococcus epidermidis (strain ATCC 35984 / DSM 28319 / BCRC 17069 / CCUG 31568 / BM 3577 / RP62A)</name>
    <dbReference type="NCBI Taxonomy" id="176279"/>
    <lineage>
        <taxon>Bacteria</taxon>
        <taxon>Bacillati</taxon>
        <taxon>Bacillota</taxon>
        <taxon>Bacilli</taxon>
        <taxon>Bacillales</taxon>
        <taxon>Staphylococcaceae</taxon>
        <taxon>Staphylococcus</taxon>
    </lineage>
</organism>
<sequence length="855" mass="98960">MLQSDINELVNQAKRVITPLSPISTFAARNPWEGLEDASFDQVARWLKSVRDVDIYPNASTIHRAISNKEIDLKVFEERLDENRAHYNNRSLSDSDINTYIQRAKNLKTIEEGYFNTKDNEKLEKWVQTNFKDYKKKEDVIAQSASVFTKEGTRLIDILNAHMIKWSKLYVDDFQSSWTMPKREKGFYHAWQRLVKHDPLFTKKQRLTLAHLPNQATEAIEYAFQELGVKEEHRQSYIESHLLSLPGWAGIMYHRSQTQSNDAYLLTDYVAIRLSIEMVLLNDHHTTLLKKSIYLQKKLEQIRYLLFNIQMNVEQWLNLSSKKQQAYIELGTRFSPFYFKKLWLDAWEETHERRLVDEIYRVPTEDTDQAKAKVQLAFCIDVRSEPFRRHLESEGPFETIGIAGFFGLPIQKEVLDEQFAHPSLPVMVEPAYRIKEYADQHEMKIYNQQQHTLTSMFYNFKLMKNNVLPSLLLPELSGPFLSIATIANTIFPKKAKRIVHRFSQKWLRKPTGKLTIQREQDAYSKLPIGFTLEEQIQFSKKALQLMDLTDDFAPLIVLCGHGSESHNNPYHASLECGACGGASSGFNAKLLAVMCNQENVRRGLLMEGIDIPRHTVFIAAEHQTSVDELEYIYVPPLTTEAQNAFDELKHVMPKVCYKANLERLASLPNINNTDHNPNAEAHRHASDWSEVRPEWGLARNAEFIIGKRQITQNSNLEGRAFLHNYDWTKDEDGEILNTIISGPALVAQWINLQYYASTVAPHYYGSGSKTTQTVTSGVGVMQGNASDLMYGLPWQSVMMNDKEAYHAPIRLLIVIQAPDAYIQRLLKHHNHFRQKVDHQWIRLASIDENNSWKDW</sequence>
<dbReference type="EMBL" id="CP000029">
    <property type="protein sequence ID" value="AAW53498.1"/>
    <property type="molecule type" value="Genomic_DNA"/>
</dbReference>
<dbReference type="RefSeq" id="WP_002456832.1">
    <property type="nucleotide sequence ID" value="NC_002976.3"/>
</dbReference>
<dbReference type="STRING" id="176279.SERP0085"/>
<dbReference type="KEGG" id="ser:SERP0085"/>
<dbReference type="eggNOG" id="COG3002">
    <property type="taxonomic scope" value="Bacteria"/>
</dbReference>
<dbReference type="HOGENOM" id="CLU_009885_0_0_9"/>
<dbReference type="Proteomes" id="UP000000531">
    <property type="component" value="Chromosome"/>
</dbReference>
<dbReference type="GO" id="GO:0005886">
    <property type="term" value="C:plasma membrane"/>
    <property type="evidence" value="ECO:0007669"/>
    <property type="project" value="UniProtKB-SubCell"/>
</dbReference>
<dbReference type="GO" id="GO:0008270">
    <property type="term" value="F:zinc ion binding"/>
    <property type="evidence" value="ECO:0007669"/>
    <property type="project" value="UniProtKB-UniRule"/>
</dbReference>
<dbReference type="HAMAP" id="MF_01871">
    <property type="entry name" value="DabA"/>
    <property type="match status" value="1"/>
</dbReference>
<dbReference type="InterPro" id="IPR018752">
    <property type="entry name" value="DabA"/>
</dbReference>
<dbReference type="PANTHER" id="PTHR38344:SF1">
    <property type="entry name" value="INORGANIC CARBON TRANSPORTER SUBUNIT DABA-RELATED"/>
    <property type="match status" value="1"/>
</dbReference>
<dbReference type="PANTHER" id="PTHR38344">
    <property type="entry name" value="UPF0753 PROTEIN AQ_863"/>
    <property type="match status" value="1"/>
</dbReference>
<dbReference type="Pfam" id="PF10070">
    <property type="entry name" value="DabA"/>
    <property type="match status" value="1"/>
</dbReference>
<keyword id="KW-1003">Cell membrane</keyword>
<keyword id="KW-0472">Membrane</keyword>
<keyword id="KW-0479">Metal-binding</keyword>
<keyword id="KW-1185">Reference proteome</keyword>
<keyword id="KW-0813">Transport</keyword>
<keyword id="KW-0862">Zinc</keyword>
<reference key="1">
    <citation type="journal article" date="2005" name="J. Bacteriol.">
        <title>Insights on evolution of virulence and resistance from the complete genome analysis of an early methicillin-resistant Staphylococcus aureus strain and a biofilm-producing methicillin-resistant Staphylococcus epidermidis strain.</title>
        <authorList>
            <person name="Gill S.R."/>
            <person name="Fouts D.E."/>
            <person name="Archer G.L."/>
            <person name="Mongodin E.F."/>
            <person name="DeBoy R.T."/>
            <person name="Ravel J."/>
            <person name="Paulsen I.T."/>
            <person name="Kolonay J.F."/>
            <person name="Brinkac L.M."/>
            <person name="Beanan M.J."/>
            <person name="Dodson R.J."/>
            <person name="Daugherty S.C."/>
            <person name="Madupu R."/>
            <person name="Angiuoli S.V."/>
            <person name="Durkin A.S."/>
            <person name="Haft D.H."/>
            <person name="Vamathevan J.J."/>
            <person name="Khouri H."/>
            <person name="Utterback T.R."/>
            <person name="Lee C."/>
            <person name="Dimitrov G."/>
            <person name="Jiang L."/>
            <person name="Qin H."/>
            <person name="Weidman J."/>
            <person name="Tran K."/>
            <person name="Kang K.H."/>
            <person name="Hance I.R."/>
            <person name="Nelson K.E."/>
            <person name="Fraser C.M."/>
        </authorList>
    </citation>
    <scope>NUCLEOTIDE SEQUENCE [LARGE SCALE GENOMIC DNA]</scope>
    <source>
        <strain>ATCC 35984 / DSM 28319 / BCRC 17069 / CCUG 31568 / BM 3577 / RP62A</strain>
    </source>
</reference>
<comment type="function">
    <text evidence="1">Part of an energy-coupled inorganic carbon pump.</text>
</comment>
<comment type="cofactor">
    <cofactor evidence="1">
        <name>Zn(2+)</name>
        <dbReference type="ChEBI" id="CHEBI:29105"/>
    </cofactor>
</comment>
<comment type="subunit">
    <text evidence="1">Forms a complex with DabB.</text>
</comment>
<comment type="subcellular location">
    <subcellularLocation>
        <location evidence="1">Cell membrane</location>
        <topology evidence="1">Peripheral membrane protein</topology>
    </subcellularLocation>
</comment>
<comment type="similarity">
    <text evidence="1">Belongs to the inorganic carbon transporter (TC 9.A.2) DabA family.</text>
</comment>
<feature type="chain" id="PRO_0000387317" description="Probable inorganic carbon transporter subunit DabA">
    <location>
        <begin position="1"/>
        <end position="855"/>
    </location>
</feature>
<feature type="binding site" evidence="1">
    <location>
        <position position="379"/>
    </location>
    <ligand>
        <name>Zn(2+)</name>
        <dbReference type="ChEBI" id="CHEBI:29105"/>
    </ligand>
</feature>
<feature type="binding site" evidence="1">
    <location>
        <position position="381"/>
    </location>
    <ligand>
        <name>Zn(2+)</name>
        <dbReference type="ChEBI" id="CHEBI:29105"/>
    </ligand>
</feature>
<feature type="binding site" evidence="1">
    <location>
        <position position="561"/>
    </location>
    <ligand>
        <name>Zn(2+)</name>
        <dbReference type="ChEBI" id="CHEBI:29105"/>
    </ligand>
</feature>
<feature type="binding site" evidence="1">
    <location>
        <position position="576"/>
    </location>
    <ligand>
        <name>Zn(2+)</name>
        <dbReference type="ChEBI" id="CHEBI:29105"/>
    </ligand>
</feature>
<gene>
    <name evidence="1" type="primary">dabA</name>
    <name type="ordered locus">SERP0085</name>
</gene>